<dbReference type="EC" id="2.5.1.75" evidence="1"/>
<dbReference type="EMBL" id="BX897700">
    <property type="protein sequence ID" value="CAF26337.1"/>
    <property type="molecule type" value="Genomic_DNA"/>
</dbReference>
<dbReference type="RefSeq" id="WP_011179578.1">
    <property type="nucleotide sequence ID" value="NC_005955.1"/>
</dbReference>
<dbReference type="SMR" id="Q6FZ96"/>
<dbReference type="KEGG" id="bqu:BQ08580"/>
<dbReference type="eggNOG" id="COG0324">
    <property type="taxonomic scope" value="Bacteria"/>
</dbReference>
<dbReference type="HOGENOM" id="CLU_032616_0_1_5"/>
<dbReference type="OrthoDB" id="9776390at2"/>
<dbReference type="Proteomes" id="UP000000597">
    <property type="component" value="Chromosome"/>
</dbReference>
<dbReference type="GO" id="GO:0005524">
    <property type="term" value="F:ATP binding"/>
    <property type="evidence" value="ECO:0007669"/>
    <property type="project" value="UniProtKB-UniRule"/>
</dbReference>
<dbReference type="GO" id="GO:0052381">
    <property type="term" value="F:tRNA dimethylallyltransferase activity"/>
    <property type="evidence" value="ECO:0007669"/>
    <property type="project" value="UniProtKB-UniRule"/>
</dbReference>
<dbReference type="GO" id="GO:0006400">
    <property type="term" value="P:tRNA modification"/>
    <property type="evidence" value="ECO:0007669"/>
    <property type="project" value="TreeGrafter"/>
</dbReference>
<dbReference type="Gene3D" id="1.10.20.140">
    <property type="match status" value="1"/>
</dbReference>
<dbReference type="Gene3D" id="1.10.287.890">
    <property type="entry name" value="Crystal structure of tRNA isopentenylpyrophosphate transferase (bh2366) domain"/>
    <property type="match status" value="1"/>
</dbReference>
<dbReference type="Gene3D" id="3.40.50.300">
    <property type="entry name" value="P-loop containing nucleotide triphosphate hydrolases"/>
    <property type="match status" value="1"/>
</dbReference>
<dbReference type="HAMAP" id="MF_00185">
    <property type="entry name" value="IPP_trans"/>
    <property type="match status" value="1"/>
</dbReference>
<dbReference type="InterPro" id="IPR039657">
    <property type="entry name" value="Dimethylallyltransferase"/>
</dbReference>
<dbReference type="InterPro" id="IPR018022">
    <property type="entry name" value="IPT"/>
</dbReference>
<dbReference type="InterPro" id="IPR027417">
    <property type="entry name" value="P-loop_NTPase"/>
</dbReference>
<dbReference type="NCBIfam" id="TIGR00174">
    <property type="entry name" value="miaA"/>
    <property type="match status" value="1"/>
</dbReference>
<dbReference type="PANTHER" id="PTHR11088">
    <property type="entry name" value="TRNA DIMETHYLALLYLTRANSFERASE"/>
    <property type="match status" value="1"/>
</dbReference>
<dbReference type="PANTHER" id="PTHR11088:SF60">
    <property type="entry name" value="TRNA DIMETHYLALLYLTRANSFERASE"/>
    <property type="match status" value="1"/>
</dbReference>
<dbReference type="Pfam" id="PF01715">
    <property type="entry name" value="IPPT"/>
    <property type="match status" value="1"/>
</dbReference>
<dbReference type="SUPFAM" id="SSF52540">
    <property type="entry name" value="P-loop containing nucleoside triphosphate hydrolases"/>
    <property type="match status" value="2"/>
</dbReference>
<reference key="1">
    <citation type="journal article" date="2004" name="Proc. Natl. Acad. Sci. U.S.A.">
        <title>The louse-borne human pathogen Bartonella quintana is a genomic derivative of the zoonotic agent Bartonella henselae.</title>
        <authorList>
            <person name="Alsmark U.C.M."/>
            <person name="Frank A.C."/>
            <person name="Karlberg E.O."/>
            <person name="Legault B.-A."/>
            <person name="Ardell D.H."/>
            <person name="Canbaeck B."/>
            <person name="Eriksson A.-S."/>
            <person name="Naeslund A.K."/>
            <person name="Handley S.A."/>
            <person name="Huvet M."/>
            <person name="La Scola B."/>
            <person name="Holmberg M."/>
            <person name="Andersson S.G.E."/>
        </authorList>
    </citation>
    <scope>NUCLEOTIDE SEQUENCE [LARGE SCALE GENOMIC DNA]</scope>
    <source>
        <strain>Toulouse</strain>
    </source>
</reference>
<proteinExistence type="inferred from homology"/>
<evidence type="ECO:0000255" key="1">
    <source>
        <dbReference type="HAMAP-Rule" id="MF_00185"/>
    </source>
</evidence>
<sequence length="295" mass="33953">MTQRTITLIAGPTVSGKSALALQMAQKKNALIINTDSMQVYDVLNILTARPTEADTAIVPHYLYGYVSPALHYSVGQWLCDVRKLLTTFTSKSLIFVGGTGLYFRALLEGLSEIPHISDAVRQKWRLRLDKEGAENLYRQLLRIDAVFAEKISSQDGQRIIRALEVYDVTGKKLSWWQKKKTPPLISPNCSEKILLIPPRQWLYERIHKRLDNMIERGALEEVFAMKKLMLSPFLPAMKAIGMPEFTAYFDGYKSFEDALEMAKTQTRRYAKRQMTWFRNQFDEEWTLISSCEEV</sequence>
<name>MIAA_BARQU</name>
<gene>
    <name evidence="1" type="primary">miaA</name>
    <name type="ordered locus">BQ08580</name>
</gene>
<feature type="chain" id="PRO_0000163879" description="tRNA dimethylallyltransferase">
    <location>
        <begin position="1"/>
        <end position="295"/>
    </location>
</feature>
<feature type="region of interest" description="Interaction with substrate tRNA" evidence="1">
    <location>
        <begin position="36"/>
        <end position="39"/>
    </location>
</feature>
<feature type="region of interest" description="Interaction with substrate tRNA" evidence="1">
    <location>
        <begin position="158"/>
        <end position="162"/>
    </location>
</feature>
<feature type="binding site" evidence="1">
    <location>
        <begin position="11"/>
        <end position="18"/>
    </location>
    <ligand>
        <name>ATP</name>
        <dbReference type="ChEBI" id="CHEBI:30616"/>
    </ligand>
</feature>
<feature type="binding site" evidence="1">
    <location>
        <begin position="13"/>
        <end position="18"/>
    </location>
    <ligand>
        <name>substrate</name>
    </ligand>
</feature>
<feature type="site" description="Interaction with substrate tRNA" evidence="1">
    <location>
        <position position="100"/>
    </location>
</feature>
<feature type="site" description="Interaction with substrate tRNA" evidence="1">
    <location>
        <position position="122"/>
    </location>
</feature>
<organism>
    <name type="scientific">Bartonella quintana (strain Toulouse)</name>
    <name type="common">Rochalimaea quintana</name>
    <dbReference type="NCBI Taxonomy" id="283165"/>
    <lineage>
        <taxon>Bacteria</taxon>
        <taxon>Pseudomonadati</taxon>
        <taxon>Pseudomonadota</taxon>
        <taxon>Alphaproteobacteria</taxon>
        <taxon>Hyphomicrobiales</taxon>
        <taxon>Bartonellaceae</taxon>
        <taxon>Bartonella</taxon>
    </lineage>
</organism>
<accession>Q6FZ96</accession>
<keyword id="KW-0067">ATP-binding</keyword>
<keyword id="KW-0460">Magnesium</keyword>
<keyword id="KW-0547">Nucleotide-binding</keyword>
<keyword id="KW-0808">Transferase</keyword>
<keyword id="KW-0819">tRNA processing</keyword>
<comment type="function">
    <text evidence="1">Catalyzes the transfer of a dimethylallyl group onto the adenine at position 37 in tRNAs that read codons beginning with uridine, leading to the formation of N6-(dimethylallyl)adenosine (i(6)A).</text>
</comment>
<comment type="catalytic activity">
    <reaction evidence="1">
        <text>adenosine(37) in tRNA + dimethylallyl diphosphate = N(6)-dimethylallyladenosine(37) in tRNA + diphosphate</text>
        <dbReference type="Rhea" id="RHEA:26482"/>
        <dbReference type="Rhea" id="RHEA-COMP:10162"/>
        <dbReference type="Rhea" id="RHEA-COMP:10375"/>
        <dbReference type="ChEBI" id="CHEBI:33019"/>
        <dbReference type="ChEBI" id="CHEBI:57623"/>
        <dbReference type="ChEBI" id="CHEBI:74411"/>
        <dbReference type="ChEBI" id="CHEBI:74415"/>
        <dbReference type="EC" id="2.5.1.75"/>
    </reaction>
</comment>
<comment type="cofactor">
    <cofactor evidence="1">
        <name>Mg(2+)</name>
        <dbReference type="ChEBI" id="CHEBI:18420"/>
    </cofactor>
</comment>
<comment type="subunit">
    <text evidence="1">Monomer.</text>
</comment>
<comment type="similarity">
    <text evidence="1">Belongs to the IPP transferase family.</text>
</comment>
<protein>
    <recommendedName>
        <fullName evidence="1">tRNA dimethylallyltransferase</fullName>
        <ecNumber evidence="1">2.5.1.75</ecNumber>
    </recommendedName>
    <alternativeName>
        <fullName evidence="1">Dimethylallyl diphosphate:tRNA dimethylallyltransferase</fullName>
        <shortName evidence="1">DMAPP:tRNA dimethylallyltransferase</shortName>
        <shortName evidence="1">DMATase</shortName>
    </alternativeName>
    <alternativeName>
        <fullName evidence="1">Isopentenyl-diphosphate:tRNA isopentenyltransferase</fullName>
        <shortName evidence="1">IPP transferase</shortName>
        <shortName evidence="1">IPPT</shortName>
        <shortName evidence="1">IPTase</shortName>
    </alternativeName>
</protein>